<proteinExistence type="evidence at protein level"/>
<accession>P70617</accession>
<protein>
    <recommendedName>
        <fullName evidence="10">Ninjurin-1</fullName>
    </recommendedName>
    <alternativeName>
        <fullName evidence="9">Nerve injury-induced protein 1</fullName>
    </alternativeName>
    <component>
        <recommendedName>
            <fullName evidence="10">Secreted ninjurin-1</fullName>
        </recommendedName>
    </component>
</protein>
<organism>
    <name type="scientific">Rattus norvegicus</name>
    <name type="common">Rat</name>
    <dbReference type="NCBI Taxonomy" id="10116"/>
    <lineage>
        <taxon>Eukaryota</taxon>
        <taxon>Metazoa</taxon>
        <taxon>Chordata</taxon>
        <taxon>Craniata</taxon>
        <taxon>Vertebrata</taxon>
        <taxon>Euteleostomi</taxon>
        <taxon>Mammalia</taxon>
        <taxon>Eutheria</taxon>
        <taxon>Euarchontoglires</taxon>
        <taxon>Glires</taxon>
        <taxon>Rodentia</taxon>
        <taxon>Myomorpha</taxon>
        <taxon>Muroidea</taxon>
        <taxon>Muridae</taxon>
        <taxon>Murinae</taxon>
        <taxon>Rattus</taxon>
    </lineage>
</organism>
<feature type="chain" id="PRO_0000159645" description="Ninjurin-1">
    <location>
        <begin position="1"/>
        <end position="152"/>
    </location>
</feature>
<feature type="chain" id="PRO_0000452826" description="Secreted ninjurin-1" evidence="1">
    <location>
        <begin position="1"/>
        <end position="56"/>
    </location>
</feature>
<feature type="topological domain" description="Extracellular" evidence="2">
    <location>
        <begin position="1"/>
        <end position="78"/>
    </location>
</feature>
<feature type="transmembrane region" description="Helical; Name=Helix alpha3" evidence="2">
    <location>
        <begin position="79"/>
        <end position="103"/>
    </location>
</feature>
<feature type="topological domain" description="Cytoplasmic" evidence="2">
    <location>
        <begin position="104"/>
        <end position="113"/>
    </location>
</feature>
<feature type="transmembrane region" description="Helical; Name=Helix alpha4" evidence="2">
    <location>
        <begin position="114"/>
        <end position="138"/>
    </location>
</feature>
<feature type="topological domain" description="Extracellular" evidence="2">
    <location>
        <begin position="139"/>
        <end position="152"/>
    </location>
</feature>
<feature type="region of interest" description="Disordered" evidence="5">
    <location>
        <begin position="1"/>
        <end position="30"/>
    </location>
</feature>
<feature type="region of interest" description="N-terminal adhesion motif" evidence="7">
    <location>
        <begin position="26"/>
        <end position="37"/>
    </location>
</feature>
<feature type="region of interest" description="Required to induce plasma membrane rupture" evidence="1">
    <location>
        <begin position="40"/>
        <end position="69"/>
    </location>
</feature>
<feature type="region of interest" description="Helix alpha1" evidence="2">
    <location>
        <begin position="44"/>
        <end position="55"/>
    </location>
</feature>
<feature type="region of interest" description="Helix alpha2" evidence="2">
    <location>
        <begin position="58"/>
        <end position="74"/>
    </location>
</feature>
<feature type="compositionally biased region" description="Acidic residues" evidence="5">
    <location>
        <begin position="1"/>
        <end position="10"/>
    </location>
</feature>
<feature type="compositionally biased region" description="Low complexity" evidence="5">
    <location>
        <begin position="16"/>
        <end position="27"/>
    </location>
</feature>
<feature type="site" description="Cleavage; by MMP9" evidence="1">
    <location>
        <begin position="56"/>
        <end position="57"/>
    </location>
</feature>
<feature type="modified residue" description="N-acetylmethionine" evidence="2">
    <location>
        <position position="1"/>
    </location>
</feature>
<feature type="modified residue" description="Phosphoserine" evidence="12">
    <location>
        <position position="18"/>
    </location>
</feature>
<feature type="modified residue" description="Phosphoserine" evidence="12">
    <location>
        <position position="21"/>
    </location>
</feature>
<feature type="modified residue" description="Phosphoserine" evidence="12">
    <location>
        <position position="25"/>
    </location>
</feature>
<feature type="glycosylation site" description="N-linked (GlcNAc...) asparagine" evidence="4">
    <location>
        <position position="60"/>
    </location>
</feature>
<keyword id="KW-0007">Acetylation</keyword>
<keyword id="KW-0037">Angiogenesis</keyword>
<keyword id="KW-0130">Cell adhesion</keyword>
<keyword id="KW-1003">Cell membrane</keyword>
<keyword id="KW-0204">Cytolysis</keyword>
<keyword id="KW-0325">Glycoprotein</keyword>
<keyword id="KW-0395">Inflammatory response</keyword>
<keyword id="KW-0472">Membrane</keyword>
<keyword id="KW-0597">Phosphoprotein</keyword>
<keyword id="KW-1185">Reference proteome</keyword>
<keyword id="KW-0964">Secreted</keyword>
<keyword id="KW-0770">Synapse</keyword>
<keyword id="KW-0812">Transmembrane</keyword>
<keyword id="KW-1133">Transmembrane helix</keyword>
<dbReference type="EMBL" id="U72660">
    <property type="protein sequence ID" value="AAB17559.1"/>
    <property type="molecule type" value="mRNA"/>
</dbReference>
<dbReference type="RefSeq" id="NP_036999.1">
    <property type="nucleotide sequence ID" value="NM_012867.2"/>
</dbReference>
<dbReference type="RefSeq" id="XP_063132147.1">
    <property type="nucleotide sequence ID" value="XM_063276077.1"/>
</dbReference>
<dbReference type="SMR" id="P70617"/>
<dbReference type="FunCoup" id="P70617">
    <property type="interactions" value="185"/>
</dbReference>
<dbReference type="STRING" id="10116.ENSRNOP00000022341"/>
<dbReference type="GlyCosmos" id="P70617">
    <property type="glycosylation" value="1 site, No reported glycans"/>
</dbReference>
<dbReference type="GlyGen" id="P70617">
    <property type="glycosylation" value="1 site"/>
</dbReference>
<dbReference type="iPTMnet" id="P70617"/>
<dbReference type="PhosphoSitePlus" id="P70617"/>
<dbReference type="jPOST" id="P70617"/>
<dbReference type="PaxDb" id="10116-ENSRNOP00000022341"/>
<dbReference type="Ensembl" id="ENSRNOT00000022341.5">
    <property type="protein sequence ID" value="ENSRNOP00000022341.1"/>
    <property type="gene ID" value="ENSRNOG00000016587.5"/>
</dbReference>
<dbReference type="GeneID" id="25338"/>
<dbReference type="KEGG" id="rno:25338"/>
<dbReference type="AGR" id="RGD:3179"/>
<dbReference type="CTD" id="4814"/>
<dbReference type="RGD" id="3179">
    <property type="gene designation" value="Ninj1"/>
</dbReference>
<dbReference type="eggNOG" id="ENOG502S12Z">
    <property type="taxonomic scope" value="Eukaryota"/>
</dbReference>
<dbReference type="GeneTree" id="ENSGT00940000158892"/>
<dbReference type="HOGENOM" id="CLU_093971_2_0_1"/>
<dbReference type="InParanoid" id="P70617"/>
<dbReference type="OMA" id="LNTMNNA"/>
<dbReference type="OrthoDB" id="6114058at2759"/>
<dbReference type="PhylomeDB" id="P70617"/>
<dbReference type="TreeFam" id="TF323538"/>
<dbReference type="PRO" id="PR:P70617"/>
<dbReference type="Proteomes" id="UP000002494">
    <property type="component" value="Chromosome 17"/>
</dbReference>
<dbReference type="Bgee" id="ENSRNOG00000016587">
    <property type="expression patterns" value="Expressed in pancreas and 19 other cell types or tissues"/>
</dbReference>
<dbReference type="GO" id="GO:0005576">
    <property type="term" value="C:extracellular region"/>
    <property type="evidence" value="ECO:0007669"/>
    <property type="project" value="UniProtKB-SubCell"/>
</dbReference>
<dbReference type="GO" id="GO:0031527">
    <property type="term" value="C:filopodium membrane"/>
    <property type="evidence" value="ECO:0000266"/>
    <property type="project" value="RGD"/>
</dbReference>
<dbReference type="GO" id="GO:0005886">
    <property type="term" value="C:plasma membrane"/>
    <property type="evidence" value="ECO:0000250"/>
    <property type="project" value="UniProtKB"/>
</dbReference>
<dbReference type="GO" id="GO:0097060">
    <property type="term" value="C:synaptic membrane"/>
    <property type="evidence" value="ECO:0000266"/>
    <property type="project" value="RGD"/>
</dbReference>
<dbReference type="GO" id="GO:0098631">
    <property type="term" value="F:cell adhesion mediator activity"/>
    <property type="evidence" value="ECO:0000314"/>
    <property type="project" value="UniProtKB"/>
</dbReference>
<dbReference type="GO" id="GO:0098632">
    <property type="term" value="F:cell-cell adhesion mediator activity"/>
    <property type="evidence" value="ECO:0000266"/>
    <property type="project" value="RGD"/>
</dbReference>
<dbReference type="GO" id="GO:0001530">
    <property type="term" value="F:lipopolysaccharide binding"/>
    <property type="evidence" value="ECO:0000250"/>
    <property type="project" value="UniProtKB"/>
</dbReference>
<dbReference type="GO" id="GO:0140912">
    <property type="term" value="F:membrane destabilizing activity"/>
    <property type="evidence" value="ECO:0000250"/>
    <property type="project" value="UniProtKB"/>
</dbReference>
<dbReference type="GO" id="GO:0001525">
    <property type="term" value="P:angiogenesis"/>
    <property type="evidence" value="ECO:0007669"/>
    <property type="project" value="UniProtKB-KW"/>
</dbReference>
<dbReference type="GO" id="GO:0007155">
    <property type="term" value="P:cell adhesion"/>
    <property type="evidence" value="ECO:0000314"/>
    <property type="project" value="UniProtKB"/>
</dbReference>
<dbReference type="GO" id="GO:0071474">
    <property type="term" value="P:cellular hyperosmotic response"/>
    <property type="evidence" value="ECO:0000250"/>
    <property type="project" value="UniProtKB"/>
</dbReference>
<dbReference type="GO" id="GO:0019835">
    <property type="term" value="P:cytolysis"/>
    <property type="evidence" value="ECO:0000250"/>
    <property type="project" value="UniProtKB"/>
</dbReference>
<dbReference type="GO" id="GO:0097707">
    <property type="term" value="P:ferroptosis"/>
    <property type="evidence" value="ECO:0000250"/>
    <property type="project" value="UniProtKB"/>
</dbReference>
<dbReference type="GO" id="GO:0034113">
    <property type="term" value="P:heterotypic cell-cell adhesion"/>
    <property type="evidence" value="ECO:0000250"/>
    <property type="project" value="UniProtKB"/>
</dbReference>
<dbReference type="GO" id="GO:1990384">
    <property type="term" value="P:hyaloid vascular plexus regression"/>
    <property type="evidence" value="ECO:0000266"/>
    <property type="project" value="RGD"/>
</dbReference>
<dbReference type="GO" id="GO:0006954">
    <property type="term" value="P:inflammatory response"/>
    <property type="evidence" value="ECO:0000266"/>
    <property type="project" value="RGD"/>
</dbReference>
<dbReference type="GO" id="GO:0031640">
    <property type="term" value="P:killing of cells of another organism"/>
    <property type="evidence" value="ECO:0007669"/>
    <property type="project" value="UniProtKB-KW"/>
</dbReference>
<dbReference type="GO" id="GO:0002232">
    <property type="term" value="P:leukocyte chemotaxis involved in inflammatory response"/>
    <property type="evidence" value="ECO:0000250"/>
    <property type="project" value="UniProtKB"/>
</dbReference>
<dbReference type="GO" id="GO:0048246">
    <property type="term" value="P:macrophage chemotaxis"/>
    <property type="evidence" value="ECO:0000266"/>
    <property type="project" value="RGD"/>
</dbReference>
<dbReference type="GO" id="GO:0042692">
    <property type="term" value="P:muscle cell differentiation"/>
    <property type="evidence" value="ECO:0000250"/>
    <property type="project" value="UniProtKB"/>
</dbReference>
<dbReference type="GO" id="GO:1905351">
    <property type="term" value="P:pericyte cell migration"/>
    <property type="evidence" value="ECO:0000266"/>
    <property type="project" value="RGD"/>
</dbReference>
<dbReference type="GO" id="GO:0045766">
    <property type="term" value="P:positive regulation of angiogenesis"/>
    <property type="evidence" value="ECO:0000314"/>
    <property type="project" value="UniProtKB"/>
</dbReference>
<dbReference type="GO" id="GO:0001954">
    <property type="term" value="P:positive regulation of cell-matrix adhesion"/>
    <property type="evidence" value="ECO:0000266"/>
    <property type="project" value="RGD"/>
</dbReference>
<dbReference type="GO" id="GO:0050729">
    <property type="term" value="P:positive regulation of inflammatory response"/>
    <property type="evidence" value="ECO:0000250"/>
    <property type="project" value="UniProtKB"/>
</dbReference>
<dbReference type="GO" id="GO:2001206">
    <property type="term" value="P:positive regulation of osteoclast development"/>
    <property type="evidence" value="ECO:0000266"/>
    <property type="project" value="RGD"/>
</dbReference>
<dbReference type="GO" id="GO:0034145">
    <property type="term" value="P:positive regulation of toll-like receptor 4 signaling pathway"/>
    <property type="evidence" value="ECO:0000250"/>
    <property type="project" value="UniProtKB"/>
</dbReference>
<dbReference type="GO" id="GO:0097300">
    <property type="term" value="P:programmed necrotic cell death"/>
    <property type="evidence" value="ECO:0000266"/>
    <property type="project" value="RGD"/>
</dbReference>
<dbReference type="GO" id="GO:0051260">
    <property type="term" value="P:protein homooligomerization"/>
    <property type="evidence" value="ECO:0000266"/>
    <property type="project" value="RGD"/>
</dbReference>
<dbReference type="GO" id="GO:0141201">
    <property type="term" value="P:pyroptotic cell death"/>
    <property type="evidence" value="ECO:0000266"/>
    <property type="project" value="RGD"/>
</dbReference>
<dbReference type="GO" id="GO:0045765">
    <property type="term" value="P:regulation of angiogenesis"/>
    <property type="evidence" value="ECO:0000266"/>
    <property type="project" value="RGD"/>
</dbReference>
<dbReference type="GO" id="GO:0042246">
    <property type="term" value="P:tissue regeneration"/>
    <property type="evidence" value="ECO:0007669"/>
    <property type="project" value="InterPro"/>
</dbReference>
<dbReference type="InterPro" id="IPR007007">
    <property type="entry name" value="Ninjurin"/>
</dbReference>
<dbReference type="PANTHER" id="PTHR12316:SF19">
    <property type="entry name" value="NINJURIN-1"/>
    <property type="match status" value="1"/>
</dbReference>
<dbReference type="PANTHER" id="PTHR12316">
    <property type="entry name" value="NINJURIN-RELATED"/>
    <property type="match status" value="1"/>
</dbReference>
<dbReference type="Pfam" id="PF04923">
    <property type="entry name" value="Ninjurin"/>
    <property type="match status" value="1"/>
</dbReference>
<comment type="function">
    <molecule>Ninjurin-1</molecule>
    <text evidence="1 2 6 7">Effector of various programmed cell death, such as pyroptosis and necroptosis, which mediates plasma membrane rupture (cytolysis) (By similarity). Oligomerizes in response to death stimuli and forms ring-like structures on the plasma membrane: acts by cutting and shedding membrane disks, like a cookie cutter, leading to membrane damage and loss that cannot be repaired by the cell (By similarity). Plasma membrane rupture leads to release intracellular molecules named damage-associated molecular patterns (DAMPs) that propagate the inflammatory response (By similarity). Mechanistically, mediates plasma membrane rupture by introducing hydrophilic faces of 2 alpha helices into the hydrophobic membrane (By similarity). Induces plasma membrane rupture downstream of Gasdermin (GSDMA, GSDMB, GSDMC, GSDMD, or GSDME) or MLKL during pyroptosis or necroptosis, respectively (By similarity). Acts as an effector of PANoptosis downstream of CASP1, CASP4, CASP8 and RIPK3 (By similarity). Also induces plasma membrane rupture in response to cell swelling caused by osmotic stress and ferroptosis downstream of lipid peroxidation (By similarity). Acts as a regulator of Toll-like receptor 4 (TLR4) signaling triggered by lipopolysaccharide (LPS) during systemic inflammation; directly binds LPS (By similarity). Involved in leukocyte migration during inflammation by promoting transendothelial migration of macrophages via homotypic binding (By similarity). Promotes the migration of monocytes across the brain endothelium to central nervous system inflammatory lesions (By similarity). Also acts as a homophilic transmembrane adhesion molecule involved in various processes such as axonal growth, cell chemotaxis and angiogenesis (By similarity). Promotes cell adhesion by mediating homophilic interactions via its extracellular N-terminal adhesion motif (N-NAM) (PubMed:19595672). Involved in the progression of the inflammatory stress by promoting cell-to-cell interactions between immune cells and endothelial cells (By similarity). Plays a role in nerve regeneration by promoting maturation of Schwann cells (By similarity). Acts as a regulator of angiogenesis (PubMed:33028854). Promotes the formation of new vessels by mediating the interaction between capillary pericyte cells and endothelial cells (By similarity). Promotes osteoclasts development by enhancing the survival of prefusion osteoclasts (By similarity). Also involved in striated muscle growth and differentiation (By similarity).</text>
</comment>
<comment type="function">
    <molecule>Secreted ninjurin-1</molecule>
    <text evidence="1">Secreted form generated by cleavage, which has chemotactic activity. Acts as an anti-inflammatory mediator by promoting monocyte recruitment, thereby ameliorating atherosclerosis.</text>
</comment>
<comment type="activity regulation">
    <molecule>Ninjurin-1</molecule>
    <text evidence="1 2">In response to death stimuli, homooligomerizes and disrupts membrane integrity by introducing the hydrophilic faces of alpha1 and alpha2 helices into the hydrophobic membrane (By similarity). Homooligomerization and ability to mediate plasma membrane rupture is inhibited by glycine; it is unclear whether glycine directly or indirectly inhibits homooligomerization (By similarity). In normal conditions, NINJ1 is autoinhibited via formation of a homodimer: in the inactive homodimer, the alpha1 and alpha2 helices (residues 44-74) form a single transmembrane region without a kink, in which hydrophilic faces of alpha1 and alpha2 helices are sequestered (By similarity).</text>
</comment>
<comment type="subunit">
    <molecule>Secreted ninjurin-1</molecule>
    <text evidence="1 2">Homodimer; in absence of death stimuli, forms an inactive homodimer (By similarity). Homooligomer; in response to death stimuli, homooligomerizes into long, highly branched filaments and large, ring-shaped structures in the membrane (By similarity). The topology shown in the entry corresponds to the activated form (By similarity).</text>
</comment>
<comment type="subcellular location">
    <molecule>Ninjurin-1</molecule>
    <subcellularLocation>
        <location evidence="2">Cell membrane</location>
        <topology evidence="2">Multi-pass membrane protein</topology>
    </subcellularLocation>
    <subcellularLocation>
        <location evidence="1">Synaptic cell membrane</location>
        <topology evidence="3">Multi-pass membrane protein</topology>
    </subcellularLocation>
</comment>
<comment type="subcellular location">
    <molecule>Secreted ninjurin-1</molecule>
    <subcellularLocation>
        <location evidence="2">Secreted</location>
    </subcellularLocation>
</comment>
<comment type="induction">
    <text evidence="8">By nerve injury.</text>
</comment>
<comment type="domain">
    <molecule>Ninjurin-1</molecule>
    <text evidence="1 2">Composed of 4 alpha helices: 2 hydrophobic transmembrane regions (alpha3 and alpha4) and 2 alpha helices (alpha1 and alpha2) (By similarity). Alpha1 and alpha2 feature one hydrophobic side and a hydrophilic side (By similarity). Following NINJ1 activation, alpha1 and alpha2 helices insert into the membrane and drive NINJ1 oligomerization via interactions between alpha3 and alpha4 and the hydrophobic face of alpha1 from an adjacent subunit (By similarity). Such structures disrupt membrane integrity and form a lesion through the introduction of the hydrophilic faces of alpha1 and alpha2 into the hydrophobic membrane (By similarity). In absence of death stimuli, NINJ1 is an inactive homodimer, where the alpha1 and alpha2 helices form a single transmembrane region without a kink: in the homodimer, hydrophilic faces of alpha1 and alpha2 helices are sequestered and the binding site for kinked alpha1 and alpha2 helices from neighboring activated NINJ1 molecules are occluded, thereby preventing membrane rupture (By similarity). The topology shown in the entry corresponds to the activated form (By similarity).</text>
</comment>
<comment type="PTM">
    <molecule>Ninjurin-1</molecule>
    <text evidence="1">Cleaved by MMP9 protease to generate the Secreted ninjurin-1 form.</text>
</comment>
<comment type="PTM">
    <molecule>Ninjurin-1</molecule>
    <text evidence="1">N-linked glycosylation is required for homooligomerization.</text>
</comment>
<comment type="similarity">
    <text evidence="10">Belongs to the ninjurin family.</text>
</comment>
<name>NINJ1_RAT</name>
<evidence type="ECO:0000250" key="1">
    <source>
        <dbReference type="UniProtKB" id="O70131"/>
    </source>
</evidence>
<evidence type="ECO:0000250" key="2">
    <source>
        <dbReference type="UniProtKB" id="Q92982"/>
    </source>
</evidence>
<evidence type="ECO:0000255" key="3"/>
<evidence type="ECO:0000255" key="4">
    <source>
        <dbReference type="PROSITE-ProRule" id="PRU00498"/>
    </source>
</evidence>
<evidence type="ECO:0000256" key="5">
    <source>
        <dbReference type="SAM" id="MobiDB-lite"/>
    </source>
</evidence>
<evidence type="ECO:0000269" key="6">
    <source>
    </source>
</evidence>
<evidence type="ECO:0000269" key="7">
    <source>
    </source>
</evidence>
<evidence type="ECO:0000269" key="8">
    <source>
    </source>
</evidence>
<evidence type="ECO:0000303" key="9">
    <source>
    </source>
</evidence>
<evidence type="ECO:0000305" key="10"/>
<evidence type="ECO:0000312" key="11">
    <source>
        <dbReference type="RGD" id="3179"/>
    </source>
</evidence>
<evidence type="ECO:0007744" key="12">
    <source>
    </source>
</evidence>
<gene>
    <name evidence="11" type="primary">Ninj1</name>
</gene>
<sequence length="152" mass="16539">MDPGTEEYELNGDLRPGSPGSPDASPPRWGLRNRPINVNHYANKKSAAESMLDIALLMANASQLKAVVEQGNEFAFFVPLVVLISISLVLQIGVGVLLIFLVKYDLNNPAKHAKLDFLNNLATGLVFIIVVVNIFITAFGVQKPVMDVAPRQ</sequence>
<reference key="1">
    <citation type="journal article" date="1996" name="Neuron">
        <title>Ninjurin, a novel adhesion molecule, is induced by nerve injury and promotes axonal growth.</title>
        <authorList>
            <person name="Araki T."/>
            <person name="Milbrandt J."/>
        </authorList>
    </citation>
    <scope>NUCLEOTIDE SEQUENCE [MRNA]</scope>
    <scope>INDUCTION</scope>
</reference>
<reference key="2">
    <citation type="journal article" date="2012" name="Nat. Commun.">
        <title>Quantitative maps of protein phosphorylation sites across 14 different rat organs and tissues.</title>
        <authorList>
            <person name="Lundby A."/>
            <person name="Secher A."/>
            <person name="Lage K."/>
            <person name="Nordsborg N.B."/>
            <person name="Dmytriyev A."/>
            <person name="Lundby C."/>
            <person name="Olsen J.V."/>
        </authorList>
    </citation>
    <scope>PHOSPHORYLATION [LARGE SCALE ANALYSIS] AT SER-18; SER-21 AND SER-25</scope>
    <scope>IDENTIFICATION BY MASS SPECTROMETRY [LARGE SCALE ANALYSIS]</scope>
</reference>
<reference key="3">
    <citation type="journal article" date="2009" name="Biochem. Biophys. Res. Commun.">
        <title>Ninjurin1 is expressed in myeloid cells and mediates endothelium adhesion in the brains of EAE rats.</title>
        <authorList>
            <person name="Ahn B.J."/>
            <person name="Lee H.J."/>
            <person name="Shin M.W."/>
            <person name="Choi J.H."/>
            <person name="Jeong J.W."/>
            <person name="Kim K.W."/>
        </authorList>
    </citation>
    <scope>FUNCTION</scope>
</reference>
<reference key="4">
    <citation type="journal article" date="2020" name="Sci. Rep.">
        <title>Ninjurin 1 dodecamer peptide containing the N-terminal adhesion motif (N-NAM) exerts proangiogenic effects in HUVECs and in the postischemic brain.</title>
        <authorList>
            <person name="Kim S.W."/>
            <person name="Lee H.K."/>
            <person name="Seol S.I."/>
            <person name="Davaanyam D."/>
            <person name="Lee H."/>
            <person name="Lee J.K."/>
        </authorList>
    </citation>
    <scope>FUNCTION</scope>
</reference>